<protein>
    <recommendedName>
        <fullName>Alpha-1-acid glycoprotein 3</fullName>
        <shortName>AGP 3</shortName>
    </recommendedName>
    <alternativeName>
        <fullName>Orosomucoid-3</fullName>
        <shortName>OMD 3</shortName>
    </alternativeName>
</protein>
<feature type="signal peptide" evidence="1">
    <location>
        <begin position="1"/>
        <end position="18"/>
    </location>
</feature>
<feature type="chain" id="PRO_0000017864" description="Alpha-1-acid glycoprotein 3">
    <location>
        <begin position="19"/>
        <end position="206"/>
    </location>
</feature>
<feature type="region of interest" description="Disordered" evidence="3">
    <location>
        <begin position="187"/>
        <end position="206"/>
    </location>
</feature>
<feature type="glycosylation site" description="N-linked (GlcNAc...) asparagine" evidence="2">
    <location>
        <position position="33"/>
    </location>
</feature>
<feature type="glycosylation site" description="N-linked (GlcNAc...) asparagine" evidence="2">
    <location>
        <position position="75"/>
    </location>
</feature>
<feature type="glycosylation site" description="N-linked (GlcNAc...) asparagine" evidence="2">
    <location>
        <position position="103"/>
    </location>
</feature>
<feature type="disulfide bond" evidence="1">
    <location>
        <begin position="90"/>
        <end position="183"/>
    </location>
</feature>
<organism>
    <name type="scientific">Mus musculus</name>
    <name type="common">Mouse</name>
    <dbReference type="NCBI Taxonomy" id="10090"/>
    <lineage>
        <taxon>Eukaryota</taxon>
        <taxon>Metazoa</taxon>
        <taxon>Chordata</taxon>
        <taxon>Craniata</taxon>
        <taxon>Vertebrata</taxon>
        <taxon>Euteleostomi</taxon>
        <taxon>Mammalia</taxon>
        <taxon>Eutheria</taxon>
        <taxon>Euarchontoglires</taxon>
        <taxon>Glires</taxon>
        <taxon>Rodentia</taxon>
        <taxon>Myomorpha</taxon>
        <taxon>Muroidea</taxon>
        <taxon>Muridae</taxon>
        <taxon>Murinae</taxon>
        <taxon>Mus</taxon>
        <taxon>Mus</taxon>
    </lineage>
</organism>
<dbReference type="EMBL" id="S38219">
    <property type="protein sequence ID" value="AAB22378.2"/>
    <property type="molecule type" value="Genomic_DNA"/>
</dbReference>
<dbReference type="CCDS" id="CCDS18252.1"/>
<dbReference type="SMR" id="Q63805"/>
<dbReference type="FunCoup" id="Q63805">
    <property type="interactions" value="448"/>
</dbReference>
<dbReference type="STRING" id="10090.ENSMUSP00000006687"/>
<dbReference type="GlyCosmos" id="Q63805">
    <property type="glycosylation" value="3 sites, No reported glycans"/>
</dbReference>
<dbReference type="GlyGen" id="Q63805">
    <property type="glycosylation" value="3 sites"/>
</dbReference>
<dbReference type="iPTMnet" id="Q63805"/>
<dbReference type="PhosphoSitePlus" id="Q63805"/>
<dbReference type="PaxDb" id="10090-ENSMUSP00000006687"/>
<dbReference type="PeptideAtlas" id="Q63805"/>
<dbReference type="ProteomicsDB" id="296424"/>
<dbReference type="AGR" id="MGI:97445"/>
<dbReference type="MGI" id="MGI:97445">
    <property type="gene designation" value="Orm3"/>
</dbReference>
<dbReference type="eggNOG" id="ENOG502S0Q2">
    <property type="taxonomic scope" value="Eukaryota"/>
</dbReference>
<dbReference type="InParanoid" id="Q63805"/>
<dbReference type="Reactome" id="R-MMU-114608">
    <property type="pathway name" value="Platelet degranulation"/>
</dbReference>
<dbReference type="Reactome" id="R-MMU-6798695">
    <property type="pathway name" value="Neutrophil degranulation"/>
</dbReference>
<dbReference type="PRO" id="PR:Q63805"/>
<dbReference type="Proteomes" id="UP000000589">
    <property type="component" value="Unplaced"/>
</dbReference>
<dbReference type="RNAct" id="Q63805">
    <property type="molecule type" value="protein"/>
</dbReference>
<dbReference type="GO" id="GO:0005615">
    <property type="term" value="C:extracellular space"/>
    <property type="evidence" value="ECO:0007669"/>
    <property type="project" value="InterPro"/>
</dbReference>
<dbReference type="GO" id="GO:0006953">
    <property type="term" value="P:acute-phase response"/>
    <property type="evidence" value="ECO:0007669"/>
    <property type="project" value="UniProtKB-KW"/>
</dbReference>
<dbReference type="GO" id="GO:0002682">
    <property type="term" value="P:regulation of immune system process"/>
    <property type="evidence" value="ECO:0007669"/>
    <property type="project" value="InterPro"/>
</dbReference>
<dbReference type="CDD" id="cd19451">
    <property type="entry name" value="lipocalin_AGP-like"/>
    <property type="match status" value="1"/>
</dbReference>
<dbReference type="FunFam" id="2.40.128.20:FF:000012">
    <property type="entry name" value="Alpha-1-acid glycoprotein 2"/>
    <property type="match status" value="1"/>
</dbReference>
<dbReference type="Gene3D" id="2.40.128.20">
    <property type="match status" value="1"/>
</dbReference>
<dbReference type="InterPro" id="IPR001500">
    <property type="entry name" value="A1A_glycop"/>
</dbReference>
<dbReference type="InterPro" id="IPR012674">
    <property type="entry name" value="Calycin"/>
</dbReference>
<dbReference type="InterPro" id="IPR000566">
    <property type="entry name" value="Lipocln_cytosolic_FA-bd_dom"/>
</dbReference>
<dbReference type="PANTHER" id="PTHR11967">
    <property type="entry name" value="ALPHA-1-ACID GLYCOPROTEIN"/>
    <property type="match status" value="1"/>
</dbReference>
<dbReference type="PANTHER" id="PTHR11967:SF2">
    <property type="entry name" value="ALPHA-1-ACID GLYCOPROTEIN 1"/>
    <property type="match status" value="1"/>
</dbReference>
<dbReference type="Pfam" id="PF00061">
    <property type="entry name" value="Lipocalin"/>
    <property type="match status" value="1"/>
</dbReference>
<dbReference type="PIRSF" id="PIRSF036899">
    <property type="entry name" value="AGP"/>
    <property type="match status" value="1"/>
</dbReference>
<dbReference type="PRINTS" id="PR00708">
    <property type="entry name" value="A1AGLPROTEIN"/>
</dbReference>
<dbReference type="SUPFAM" id="SSF50814">
    <property type="entry name" value="Lipocalins"/>
    <property type="match status" value="1"/>
</dbReference>
<sequence length="206" mass="24069">MELHTVLIMLSLLPLLEAQNPEHAINIGDPITNETLSWLSGKWFLIAVADSDPDYRQEIQKVQTIFFYLTLNKINDTMELREYHTKDDHCVYNSNLLGFQRENGTLFKYEGEVENPSHLRVLEKHGAIMLFFDLKDEKKRGLSLSARRPDIPPELREVFQKAVTHVGMDESEIIFVDWKKDRCSEQEKKHLELEKETKKDPEESQA</sequence>
<gene>
    <name type="primary">Orm3</name>
    <name type="synonym">Agp-3</name>
    <name type="synonym">Orm-3</name>
</gene>
<keyword id="KW-0011">Acute phase</keyword>
<keyword id="KW-1015">Disulfide bond</keyword>
<keyword id="KW-0325">Glycoprotein</keyword>
<keyword id="KW-1185">Reference proteome</keyword>
<keyword id="KW-0964">Secreted</keyword>
<keyword id="KW-0732">Signal</keyword>
<keyword id="KW-0813">Transport</keyword>
<comment type="function">
    <text evidence="1">Functions as a transport protein in the blood stream. Binds various ligands in the interior of its beta-barrel domain (By similarity). Appears to function in modulating the activity of the immune system during the acute-phase reaction.</text>
</comment>
<comment type="subcellular location">
    <subcellularLocation>
        <location>Secreted</location>
    </subcellularLocation>
</comment>
<comment type="domain">
    <text evidence="1">Contains a beta-barrel that binds various ligands in its interior.</text>
</comment>
<comment type="similarity">
    <text evidence="4">Belongs to the calycin superfamily. Lipocalin family.</text>
</comment>
<reference key="1">
    <citation type="journal article" date="1992" name="DNA Cell Biol.">
        <title>Structure and expression of mouse alpha 1-acid glycoprotein gene-3 (AGP-3).</title>
        <authorList>
            <person name="Chang C.J."/>
            <person name="Lai M.Y."/>
            <person name="Chen D.S."/>
            <person name="Lee S.C."/>
        </authorList>
    </citation>
    <scope>NUCLEOTIDE SEQUENCE [GENOMIC DNA]</scope>
    <source>
        <strain>C57BL/6J</strain>
        <tissue>Lymphocyte</tissue>
    </source>
</reference>
<name>A1AG3_MOUSE</name>
<evidence type="ECO:0000250" key="1"/>
<evidence type="ECO:0000255" key="2"/>
<evidence type="ECO:0000256" key="3">
    <source>
        <dbReference type="SAM" id="MobiDB-lite"/>
    </source>
</evidence>
<evidence type="ECO:0000305" key="4"/>
<accession>Q63805</accession>
<proteinExistence type="inferred from homology"/>